<organism>
    <name type="scientific">Arabidopsis thaliana</name>
    <name type="common">Mouse-ear cress</name>
    <dbReference type="NCBI Taxonomy" id="3702"/>
    <lineage>
        <taxon>Eukaryota</taxon>
        <taxon>Viridiplantae</taxon>
        <taxon>Streptophyta</taxon>
        <taxon>Embryophyta</taxon>
        <taxon>Tracheophyta</taxon>
        <taxon>Spermatophyta</taxon>
        <taxon>Magnoliopsida</taxon>
        <taxon>eudicotyledons</taxon>
        <taxon>Gunneridae</taxon>
        <taxon>Pentapetalae</taxon>
        <taxon>rosids</taxon>
        <taxon>malvids</taxon>
        <taxon>Brassicales</taxon>
        <taxon>Brassicaceae</taxon>
        <taxon>Camelineae</taxon>
        <taxon>Arabidopsis</taxon>
    </lineage>
</organism>
<sequence>MGTENQGYPNFPARPASSPFASAPPPGIPPQSGGPPTGSEAVGFRPFTPSASQPTRPFTASGPPPAPPVGTMRPGQPSPFVSQIPGSRPPPPSSNSFPSPAYGPPGGAPFQRFPSPPFPTTQNPPQGPPPPQTLAGHLSPPMSLRPQQPMAPVAMGPPPQSTTSGLPGANAYPPATDYHMPARPGFQQSMPPVTPSYPGVGGSQPSFPGYPSKQVLQAPTPFQTSQGPPGPPPVSSYPPHTGGFAQRPNMAAQQNLHPNYAPPPSNVQGLTEDFNSLSLSSIPGSLEPGLDHKSFPRPLDGDVEPNSFAEMYPMNCHSRYLRLTTSAIPNSQSLASRWHLPLGAVVCPLAETPEGEEVPLIDFGSTGIIRCRRCRTYVNPFVTFTDSGRKWRCNICSMLNDVPGEYFSHLDATGRRMDMDQRPELTKGSVEIIAPTEYMVRPPMPPIYFFLIDVSISATKSGMLEVVAQTIKSCLDNLPGYPRTQIGFITYDSTLHFYNMKSSLSQPQMMVVSDLDDIFVPLPDDLLVNLSESRTVVDAFLDSLPLMFQDNFNVESAFGPALRAAFMVMNQLGGKLLIFQNSLPSLGAGRLKLRGDDPRVYGTDKEYALRVAEDPFYKQMAADCTKFQIGINVYAFSDKYTDIASLGTLAKYTGGQVYYYPGFQSSVHGDKLRHELARDLTRETAWEAVMRIRCGKGIRFSSYHGNFMLRSTDLLALPAVDCDKAYAMQLSLEETLLTSQTVYFQVALLYTASCGERRIRVHTSVAPVVTDLGEMYRQADTGSIVSLYARLAIEKSLSAKLDDARNAIQQKIVKALKEYRNLHAVQHRLGSRLVYPESLKFLPLYGLAITKSTPLLGGPADTSLDERCAAGFTMMALPVKKLLKLLYPNLFRVDEWLLKPSAAHDDFKDVLRRLPLAAESLDSRGLYIYDDGFRLVLWFGRMLSPDIAKNLLGVDFAADLSRVTFQEQENGMSKKLMRLVKKLRESDPSYHPMCFLVRQGEQPREGFLLLRNLIEDQMGGSSGYVDWILQLHRQVQQN</sequence>
<protein>
    <recommendedName>
        <fullName evidence="8 9 10">Protein transport protein SEC24 A</fullName>
        <shortName evidence="8">AtSec24A</shortName>
    </recommendedName>
    <alternativeName>
        <fullName evidence="9">Protein G92/ENDOPLASMIC RETICULUM MORPHOLOGY 2</fullName>
    </alternativeName>
</protein>
<evidence type="ECO:0000250" key="1">
    <source>
        <dbReference type="UniProtKB" id="O95486"/>
    </source>
</evidence>
<evidence type="ECO:0000256" key="2">
    <source>
        <dbReference type="SAM" id="MobiDB-lite"/>
    </source>
</evidence>
<evidence type="ECO:0000269" key="3">
    <source>
    </source>
</evidence>
<evidence type="ECO:0000269" key="4">
    <source>
    </source>
</evidence>
<evidence type="ECO:0000269" key="5">
    <source>
    </source>
</evidence>
<evidence type="ECO:0000269" key="6">
    <source>
    </source>
</evidence>
<evidence type="ECO:0000269" key="7">
    <source>
    </source>
</evidence>
<evidence type="ECO:0000303" key="8">
    <source>
    </source>
</evidence>
<evidence type="ECO:0000303" key="9">
    <source>
    </source>
</evidence>
<evidence type="ECO:0000303" key="10">
    <source>
    </source>
</evidence>
<evidence type="ECO:0000305" key="11"/>
<evidence type="ECO:0000312" key="12">
    <source>
        <dbReference type="Araport" id="AT3G07100"/>
    </source>
</evidence>
<evidence type="ECO:0000312" key="13">
    <source>
        <dbReference type="EMBL" id="AAF20236.1"/>
    </source>
</evidence>
<feature type="chain" id="PRO_0000205158" description="Protein transport protein SEC24 A">
    <location>
        <begin position="1"/>
        <end position="1038"/>
    </location>
</feature>
<feature type="region of interest" description="Disordered" evidence="2">
    <location>
        <begin position="1"/>
        <end position="247"/>
    </location>
</feature>
<feature type="region of interest" description="Zinc finger-like" evidence="1">
    <location>
        <begin position="371"/>
        <end position="396"/>
    </location>
</feature>
<feature type="compositionally biased region" description="Pro residues" evidence="2">
    <location>
        <begin position="22"/>
        <end position="33"/>
    </location>
</feature>
<feature type="binding site" evidence="1">
    <location>
        <position position="371"/>
    </location>
    <ligand>
        <name>Zn(2+)</name>
        <dbReference type="ChEBI" id="CHEBI:29105"/>
    </ligand>
</feature>
<feature type="binding site" evidence="1">
    <location>
        <position position="374"/>
    </location>
    <ligand>
        <name>Zn(2+)</name>
        <dbReference type="ChEBI" id="CHEBI:29105"/>
    </ligand>
</feature>
<feature type="binding site" evidence="1">
    <location>
        <position position="393"/>
    </location>
    <ligand>
        <name>Zn(2+)</name>
        <dbReference type="ChEBI" id="CHEBI:29105"/>
    </ligand>
</feature>
<feature type="binding site" evidence="1">
    <location>
        <position position="396"/>
    </location>
    <ligand>
        <name>Zn(2+)</name>
        <dbReference type="ChEBI" id="CHEBI:29105"/>
    </ligand>
</feature>
<feature type="mutagenesis site" description="In sec24a-2; ectopic highly endoreduplicated giant cells with enlarged nuclei covering the sepal epidermis, associated with increased phosphorylated CDKA;1 levels. Abnormal endoplasmic reticulum (ER) and Golgi morphology with globular structures, especially in sepals. Prominent shoot developmental defects, dwarfism, increased lobing of sepal cells and male sterility. Decreased numbers of giant cells in sepal epidermis when associated with acr4-24 and dek1-4 mutants." evidence="6">
    <original>P</original>
    <variation>S</variation>
    <location>
        <position position="443"/>
    </location>
</feature>
<feature type="mutagenesis site" description="In ermo2; disturbed subcellular distribution. Abnormal endoplasmic reticulum (ER) and Golgi morphology in seedlings. No detectable differences in the distribution of Golgi membrane and secretory markers, but slightly perturbed localization of markers normally destined to proximal or distal locations. No effect on turnip mosaic virus (TuMV) viral RNA (vRNA) replication, but delayed TuMV systemic cell-to-cell movement, thus slowing systemic infection by TuMV." evidence="3 7">
    <original>R</original>
    <variation>K</variation>
    <location>
        <position position="693"/>
    </location>
</feature>
<name>SC24A_ARATH</name>
<reference key="1">
    <citation type="journal article" date="2000" name="Nature">
        <title>Sequence and analysis of chromosome 3 of the plant Arabidopsis thaliana.</title>
        <authorList>
            <person name="Salanoubat M."/>
            <person name="Lemcke K."/>
            <person name="Rieger M."/>
            <person name="Ansorge W."/>
            <person name="Unseld M."/>
            <person name="Fartmann B."/>
            <person name="Valle G."/>
            <person name="Bloecker H."/>
            <person name="Perez-Alonso M."/>
            <person name="Obermaier B."/>
            <person name="Delseny M."/>
            <person name="Boutry M."/>
            <person name="Grivell L.A."/>
            <person name="Mache R."/>
            <person name="Puigdomenech P."/>
            <person name="De Simone V."/>
            <person name="Choisne N."/>
            <person name="Artiguenave F."/>
            <person name="Robert C."/>
            <person name="Brottier P."/>
            <person name="Wincker P."/>
            <person name="Cattolico L."/>
            <person name="Weissenbach J."/>
            <person name="Saurin W."/>
            <person name="Quetier F."/>
            <person name="Schaefer M."/>
            <person name="Mueller-Auer S."/>
            <person name="Gabel C."/>
            <person name="Fuchs M."/>
            <person name="Benes V."/>
            <person name="Wurmbach E."/>
            <person name="Drzonek H."/>
            <person name="Erfle H."/>
            <person name="Jordan N."/>
            <person name="Bangert S."/>
            <person name="Wiedelmann R."/>
            <person name="Kranz H."/>
            <person name="Voss H."/>
            <person name="Holland R."/>
            <person name="Brandt P."/>
            <person name="Nyakatura G."/>
            <person name="Vezzi A."/>
            <person name="D'Angelo M."/>
            <person name="Pallavicini A."/>
            <person name="Toppo S."/>
            <person name="Simionati B."/>
            <person name="Conrad A."/>
            <person name="Hornischer K."/>
            <person name="Kauer G."/>
            <person name="Loehnert T.-H."/>
            <person name="Nordsiek G."/>
            <person name="Reichelt J."/>
            <person name="Scharfe M."/>
            <person name="Schoen O."/>
            <person name="Bargues M."/>
            <person name="Terol J."/>
            <person name="Climent J."/>
            <person name="Navarro P."/>
            <person name="Collado C."/>
            <person name="Perez-Perez A."/>
            <person name="Ottenwaelder B."/>
            <person name="Duchemin D."/>
            <person name="Cooke R."/>
            <person name="Laudie M."/>
            <person name="Berger-Llauro C."/>
            <person name="Purnelle B."/>
            <person name="Masuy D."/>
            <person name="de Haan M."/>
            <person name="Maarse A.C."/>
            <person name="Alcaraz J.-P."/>
            <person name="Cottet A."/>
            <person name="Casacuberta E."/>
            <person name="Monfort A."/>
            <person name="Argiriou A."/>
            <person name="Flores M."/>
            <person name="Liguori R."/>
            <person name="Vitale D."/>
            <person name="Mannhaupt G."/>
            <person name="Haase D."/>
            <person name="Schoof H."/>
            <person name="Rudd S."/>
            <person name="Zaccaria P."/>
            <person name="Mewes H.-W."/>
            <person name="Mayer K.F.X."/>
            <person name="Kaul S."/>
            <person name="Town C.D."/>
            <person name="Koo H.L."/>
            <person name="Tallon L.J."/>
            <person name="Jenkins J."/>
            <person name="Rooney T."/>
            <person name="Rizzo M."/>
            <person name="Walts A."/>
            <person name="Utterback T."/>
            <person name="Fujii C.Y."/>
            <person name="Shea T.P."/>
            <person name="Creasy T.H."/>
            <person name="Haas B."/>
            <person name="Maiti R."/>
            <person name="Wu D."/>
            <person name="Peterson J."/>
            <person name="Van Aken S."/>
            <person name="Pai G."/>
            <person name="Militscher J."/>
            <person name="Sellers P."/>
            <person name="Gill J.E."/>
            <person name="Feldblyum T.V."/>
            <person name="Preuss D."/>
            <person name="Lin X."/>
            <person name="Nierman W.C."/>
            <person name="Salzberg S.L."/>
            <person name="White O."/>
            <person name="Venter J.C."/>
            <person name="Fraser C.M."/>
            <person name="Kaneko T."/>
            <person name="Nakamura Y."/>
            <person name="Sato S."/>
            <person name="Kato T."/>
            <person name="Asamizu E."/>
            <person name="Sasamoto S."/>
            <person name="Kimura T."/>
            <person name="Idesawa K."/>
            <person name="Kawashima K."/>
            <person name="Kishida Y."/>
            <person name="Kiyokawa C."/>
            <person name="Kohara M."/>
            <person name="Matsumoto M."/>
            <person name="Matsuno A."/>
            <person name="Muraki A."/>
            <person name="Nakayama S."/>
            <person name="Nakazaki N."/>
            <person name="Shinpo S."/>
            <person name="Takeuchi C."/>
            <person name="Wada T."/>
            <person name="Watanabe A."/>
            <person name="Yamada M."/>
            <person name="Yasuda M."/>
            <person name="Tabata S."/>
        </authorList>
    </citation>
    <scope>NUCLEOTIDE SEQUENCE [LARGE SCALE GENOMIC DNA]</scope>
    <source>
        <strain>cv. Columbia</strain>
    </source>
</reference>
<reference key="2">
    <citation type="journal article" date="2017" name="Plant J.">
        <title>Araport11: a complete reannotation of the Arabidopsis thaliana reference genome.</title>
        <authorList>
            <person name="Cheng C.Y."/>
            <person name="Krishnakumar V."/>
            <person name="Chan A.P."/>
            <person name="Thibaud-Nissen F."/>
            <person name="Schobel S."/>
            <person name="Town C.D."/>
        </authorList>
    </citation>
    <scope>GENOME REANNOTATION</scope>
    <source>
        <strain>cv. Columbia</strain>
    </source>
</reference>
<reference key="3">
    <citation type="journal article" date="2003" name="Science">
        <title>Empirical analysis of transcriptional activity in the Arabidopsis genome.</title>
        <authorList>
            <person name="Yamada K."/>
            <person name="Lim J."/>
            <person name="Dale J.M."/>
            <person name="Chen H."/>
            <person name="Shinn P."/>
            <person name="Palm C.J."/>
            <person name="Southwick A.M."/>
            <person name="Wu H.C."/>
            <person name="Kim C.J."/>
            <person name="Nguyen M."/>
            <person name="Pham P.K."/>
            <person name="Cheuk R.F."/>
            <person name="Karlin-Newmann G."/>
            <person name="Liu S.X."/>
            <person name="Lam B."/>
            <person name="Sakano H."/>
            <person name="Wu T."/>
            <person name="Yu G."/>
            <person name="Miranda M."/>
            <person name="Quach H.L."/>
            <person name="Tripp M."/>
            <person name="Chang C.H."/>
            <person name="Lee J.M."/>
            <person name="Toriumi M.J."/>
            <person name="Chan M.M."/>
            <person name="Tang C.C."/>
            <person name="Onodera C.S."/>
            <person name="Deng J.M."/>
            <person name="Akiyama K."/>
            <person name="Ansari Y."/>
            <person name="Arakawa T."/>
            <person name="Banh J."/>
            <person name="Banno F."/>
            <person name="Bowser L."/>
            <person name="Brooks S.Y."/>
            <person name="Carninci P."/>
            <person name="Chao Q."/>
            <person name="Choy N."/>
            <person name="Enju A."/>
            <person name="Goldsmith A.D."/>
            <person name="Gurjal M."/>
            <person name="Hansen N.F."/>
            <person name="Hayashizaki Y."/>
            <person name="Johnson-Hopson C."/>
            <person name="Hsuan V.W."/>
            <person name="Iida K."/>
            <person name="Karnes M."/>
            <person name="Khan S."/>
            <person name="Koesema E."/>
            <person name="Ishida J."/>
            <person name="Jiang P.X."/>
            <person name="Jones T."/>
            <person name="Kawai J."/>
            <person name="Kamiya A."/>
            <person name="Meyers C."/>
            <person name="Nakajima M."/>
            <person name="Narusaka M."/>
            <person name="Seki M."/>
            <person name="Sakurai T."/>
            <person name="Satou M."/>
            <person name="Tamse R."/>
            <person name="Vaysberg M."/>
            <person name="Wallender E.K."/>
            <person name="Wong C."/>
            <person name="Yamamura Y."/>
            <person name="Yuan S."/>
            <person name="Shinozaki K."/>
            <person name="Davis R.W."/>
            <person name="Theologis A."/>
            <person name="Ecker J.R."/>
        </authorList>
    </citation>
    <scope>NUCLEOTIDE SEQUENCE [LARGE SCALE MRNA]</scope>
    <source>
        <strain>cv. Columbia</strain>
    </source>
</reference>
<reference key="4">
    <citation type="submission" date="2005-03" db="EMBL/GenBank/DDBJ databases">
        <title>Large-scale analysis of RIKEN Arabidopsis full-length (RAFL) cDNAs.</title>
        <authorList>
            <person name="Totoki Y."/>
            <person name="Seki M."/>
            <person name="Ishida J."/>
            <person name="Nakajima M."/>
            <person name="Enju A."/>
            <person name="Kamiya A."/>
            <person name="Narusaka M."/>
            <person name="Shin-i T."/>
            <person name="Nakagawa M."/>
            <person name="Sakamoto N."/>
            <person name="Oishi K."/>
            <person name="Kohara Y."/>
            <person name="Kobayashi M."/>
            <person name="Toyoda A."/>
            <person name="Sakaki Y."/>
            <person name="Sakurai T."/>
            <person name="Iida K."/>
            <person name="Akiyama K."/>
            <person name="Satou M."/>
            <person name="Toyoda T."/>
            <person name="Konagaya A."/>
            <person name="Carninci P."/>
            <person name="Kawai J."/>
            <person name="Hayashizaki Y."/>
            <person name="Shinozaki K."/>
        </authorList>
    </citation>
    <scope>NUCLEOTIDE SEQUENCE [LARGE SCALE MRNA] OF 751-1038</scope>
    <source>
        <strain>cv. Columbia</strain>
    </source>
</reference>
<reference key="5">
    <citation type="journal article" date="2009" name="Plant Cell">
        <title>A missense mutation in the Arabidopsis COPII coat protein Sec24A induces the formation of clusters of the endoplasmic reticulum and Golgi apparatus.</title>
        <authorList>
            <person name="Faso C."/>
            <person name="Chen Y.-N."/>
            <person name="Tamura K."/>
            <person name="Held M."/>
            <person name="Zemelis S."/>
            <person name="Marti L."/>
            <person name="Saravanan R."/>
            <person name="Hummel E."/>
            <person name="Kung L."/>
            <person name="Miller E."/>
            <person name="Hawes C."/>
            <person name="Brandizzi F."/>
        </authorList>
    </citation>
    <scope>FUNCTION</scope>
    <scope>MUTAGENESIS OF ARG-693</scope>
    <scope>DISRUPTION PHENOTYPE</scope>
    <scope>SUBCELLULAR LOCATION</scope>
    <source>
        <strain>cv. Columbia</strain>
    </source>
</reference>
<reference key="6">
    <citation type="journal article" date="2011" name="J. Exp. Bot.">
        <title>Evidence for the involvement of the Arabidopsis SEC24A in male transmission.</title>
        <authorList>
            <person name="Conger R."/>
            <person name="Chen Y."/>
            <person name="Fornaciari S."/>
            <person name="Faso C."/>
            <person name="Held M.A."/>
            <person name="Renna L."/>
            <person name="Brandizzi F."/>
        </authorList>
    </citation>
    <scope>FUNCTION</scope>
    <scope>DISRUPTION PHENOTYPE</scope>
    <scope>TISSUE SPECIFICITY</scope>
    <scope>DEVELOPMENTAL STAGE</scope>
    <source>
        <strain>cv. Columbia</strain>
    </source>
</reference>
<reference key="7">
    <citation type="journal article" date="2014" name="Plant Physiol.">
        <title>Endomembrane trafficking protein SEC24A regulates cell size patterning in Arabidopsis.</title>
        <authorList>
            <person name="Qu X."/>
            <person name="Chatty P.R."/>
            <person name="Roeder A.H.K."/>
        </authorList>
    </citation>
    <scope>FUNCTION</scope>
    <scope>MUTAGENESIS OF PRO-443 AND ARG-693</scope>
    <scope>DEVELOPMENTAL STAGE</scope>
    <scope>TISSUE SPECIFICITY</scope>
    <scope>INTERACTION WITH SEC221; SEC23E/SEC23A; SEC23B; SEC23G/SEC23C AND SEC23F/SEC23D</scope>
    <scope>GENE FAMILY</scope>
    <source>
        <strain>cv. Landsberg erecta</strain>
    </source>
</reference>
<reference key="8">
    <citation type="journal article" date="2014" name="PLoS ONE">
        <title>Study of the plant COPII vesicle coat subunits by functional complementation of yeast Saccharomyces cerevisiae mutants.</title>
        <authorList>
            <person name="De Craene J.-O."/>
            <person name="Courte F."/>
            <person name="Rinaldi B."/>
            <person name="Fitterer C."/>
            <person name="Herranz M.C."/>
            <person name="Schmitt-Keichinger C."/>
            <person name="Ritzenthaler C."/>
            <person name="Friant S."/>
        </authorList>
    </citation>
    <scope>FUNCTION</scope>
    <scope>GENE FAMILY</scope>
    <source>
        <strain>cv. Columbia</strain>
    </source>
</reference>
<reference key="9">
    <citation type="journal article" date="2015" name="J. Virol.">
        <title>The vesicle-forming 6K2 protein of turnip mosaic virus interacts with the COPII coatomer Sec24a for viral systemic infection.</title>
        <authorList>
            <person name="Jiang J."/>
            <person name="Patarroyo C."/>
            <person name="Garcia Cabanillas D."/>
            <person name="Zheng H."/>
            <person name="Laliberte J.-F."/>
        </authorList>
    </citation>
    <scope>FUNCTION (MICROBIAL INFECTION)</scope>
    <scope>INTERACTION WITH TURNIP MOSAIC VIRUS 6K2 (MICROBIAL INFECTION)</scope>
    <scope>MUTAGENESIS OF ARG-693</scope>
    <source>
        <strain>cv. Columbia</strain>
    </source>
</reference>
<reference key="10">
    <citation type="journal article" date="2016" name="Trends Plant Sci.">
        <title>COPII paralogs in plants: functional redundancy or diversity?</title>
        <authorList>
            <person name="Chung K.P."/>
            <person name="Zeng Y."/>
            <person name="Jiang L."/>
        </authorList>
    </citation>
    <scope>REVIEW ON COAT PROTEIN COMPLEX II (COPII) VESICLES</scope>
    <scope>GENE FAMILY</scope>
    <scope>NOMENCLATURE</scope>
</reference>
<keyword id="KW-0963">Cytoplasm</keyword>
<keyword id="KW-0968">Cytoplasmic vesicle</keyword>
<keyword id="KW-0256">Endoplasmic reticulum</keyword>
<keyword id="KW-0931">ER-Golgi transport</keyword>
<keyword id="KW-0333">Golgi apparatus</keyword>
<keyword id="KW-0945">Host-virus interaction</keyword>
<keyword id="KW-0472">Membrane</keyword>
<keyword id="KW-0479">Metal-binding</keyword>
<keyword id="KW-0653">Protein transport</keyword>
<keyword id="KW-1185">Reference proteome</keyword>
<keyword id="KW-0813">Transport</keyword>
<keyword id="KW-0862">Zinc</keyword>
<dbReference type="EMBL" id="AC012395">
    <property type="protein sequence ID" value="AAF20236.1"/>
    <property type="status" value="ALT_SEQ"/>
    <property type="molecule type" value="Genomic_DNA"/>
</dbReference>
<dbReference type="EMBL" id="CP002686">
    <property type="protein sequence ID" value="AEE74498.1"/>
    <property type="molecule type" value="Genomic_DNA"/>
</dbReference>
<dbReference type="EMBL" id="AY136376">
    <property type="protein sequence ID" value="AAM97042.1"/>
    <property type="molecule type" value="mRNA"/>
</dbReference>
<dbReference type="EMBL" id="BT000173">
    <property type="protein sequence ID" value="AAN15492.1"/>
    <property type="molecule type" value="mRNA"/>
</dbReference>
<dbReference type="EMBL" id="AK221955">
    <property type="protein sequence ID" value="BAD94443.1"/>
    <property type="status" value="ALT_INIT"/>
    <property type="molecule type" value="mRNA"/>
</dbReference>
<dbReference type="RefSeq" id="NP_187366.2">
    <property type="nucleotide sequence ID" value="NM_111590.4"/>
</dbReference>
<dbReference type="SMR" id="Q9SFU0"/>
<dbReference type="BioGRID" id="5231">
    <property type="interactions" value="8"/>
</dbReference>
<dbReference type="FunCoup" id="Q9SFU0">
    <property type="interactions" value="4258"/>
</dbReference>
<dbReference type="STRING" id="3702.Q9SFU0"/>
<dbReference type="PaxDb" id="3702-AT3G07100.1"/>
<dbReference type="ProteomicsDB" id="232847"/>
<dbReference type="EnsemblPlants" id="AT3G07100.1">
    <property type="protein sequence ID" value="AT3G07100.1"/>
    <property type="gene ID" value="AT3G07100"/>
</dbReference>
<dbReference type="GeneID" id="819896"/>
<dbReference type="Gramene" id="AT3G07100.1">
    <property type="protein sequence ID" value="AT3G07100.1"/>
    <property type="gene ID" value="AT3G07100"/>
</dbReference>
<dbReference type="KEGG" id="ath:AT3G07100"/>
<dbReference type="Araport" id="AT3G07100"/>
<dbReference type="TAIR" id="AT3G07100">
    <property type="gene designation" value="ERMO2"/>
</dbReference>
<dbReference type="eggNOG" id="KOG1985">
    <property type="taxonomic scope" value="Eukaryota"/>
</dbReference>
<dbReference type="HOGENOM" id="CLU_004589_4_1_1"/>
<dbReference type="InParanoid" id="Q9SFU0"/>
<dbReference type="OMA" id="AVECSKQ"/>
<dbReference type="OrthoDB" id="49016at2759"/>
<dbReference type="PhylomeDB" id="Q9SFU0"/>
<dbReference type="PRO" id="PR:Q9SFU0"/>
<dbReference type="Proteomes" id="UP000006548">
    <property type="component" value="Chromosome 3"/>
</dbReference>
<dbReference type="ExpressionAtlas" id="Q9SFU0">
    <property type="expression patterns" value="baseline and differential"/>
</dbReference>
<dbReference type="GO" id="GO:0030127">
    <property type="term" value="C:COPII vesicle coat"/>
    <property type="evidence" value="ECO:0007669"/>
    <property type="project" value="InterPro"/>
</dbReference>
<dbReference type="GO" id="GO:0005829">
    <property type="term" value="C:cytosol"/>
    <property type="evidence" value="ECO:0000314"/>
    <property type="project" value="UniProtKB"/>
</dbReference>
<dbReference type="GO" id="GO:0005789">
    <property type="term" value="C:endoplasmic reticulum membrane"/>
    <property type="evidence" value="ECO:0007669"/>
    <property type="project" value="UniProtKB-SubCell"/>
</dbReference>
<dbReference type="GO" id="GO:0005794">
    <property type="term" value="C:Golgi apparatus"/>
    <property type="evidence" value="ECO:0000314"/>
    <property type="project" value="UniProtKB"/>
</dbReference>
<dbReference type="GO" id="GO:0000139">
    <property type="term" value="C:Golgi membrane"/>
    <property type="evidence" value="ECO:0007669"/>
    <property type="project" value="UniProtKB-SubCell"/>
</dbReference>
<dbReference type="GO" id="GO:0008270">
    <property type="term" value="F:zinc ion binding"/>
    <property type="evidence" value="ECO:0007669"/>
    <property type="project" value="InterPro"/>
</dbReference>
<dbReference type="GO" id="GO:0007029">
    <property type="term" value="P:endoplasmic reticulum organization"/>
    <property type="evidence" value="ECO:0000315"/>
    <property type="project" value="UniProtKB"/>
</dbReference>
<dbReference type="GO" id="GO:0006888">
    <property type="term" value="P:endoplasmic reticulum to Golgi vesicle-mediated transport"/>
    <property type="evidence" value="ECO:0000315"/>
    <property type="project" value="UniProtKB"/>
</dbReference>
<dbReference type="GO" id="GO:0080119">
    <property type="term" value="P:ER body organization"/>
    <property type="evidence" value="ECO:0000315"/>
    <property type="project" value="TAIR"/>
</dbReference>
<dbReference type="GO" id="GO:0007030">
    <property type="term" value="P:Golgi organization"/>
    <property type="evidence" value="ECO:0000315"/>
    <property type="project" value="UniProtKB"/>
</dbReference>
<dbReference type="GO" id="GO:0006886">
    <property type="term" value="P:intracellular protein transport"/>
    <property type="evidence" value="ECO:0000315"/>
    <property type="project" value="UniProtKB"/>
</dbReference>
<dbReference type="GO" id="GO:0048232">
    <property type="term" value="P:male gamete generation"/>
    <property type="evidence" value="ECO:0000315"/>
    <property type="project" value="TAIR"/>
</dbReference>
<dbReference type="GO" id="GO:0032876">
    <property type="term" value="P:negative regulation of DNA endoreduplication"/>
    <property type="evidence" value="ECO:0000315"/>
    <property type="project" value="TAIR"/>
</dbReference>
<dbReference type="GO" id="GO:0009555">
    <property type="term" value="P:pollen development"/>
    <property type="evidence" value="ECO:0000315"/>
    <property type="project" value="UniProtKB"/>
</dbReference>
<dbReference type="GO" id="GO:0008361">
    <property type="term" value="P:regulation of cell size"/>
    <property type="evidence" value="ECO:0000315"/>
    <property type="project" value="TAIR"/>
</dbReference>
<dbReference type="GO" id="GO:0090392">
    <property type="term" value="P:sepal giant cell differentiation"/>
    <property type="evidence" value="ECO:0000315"/>
    <property type="project" value="UniProtKB"/>
</dbReference>
<dbReference type="GO" id="GO:0046740">
    <property type="term" value="P:transport of virus in host, cell to cell"/>
    <property type="evidence" value="ECO:0000314"/>
    <property type="project" value="UniProtKB"/>
</dbReference>
<dbReference type="CDD" id="cd01479">
    <property type="entry name" value="Sec24-like"/>
    <property type="match status" value="1"/>
</dbReference>
<dbReference type="FunFam" id="3.40.50.410:FF:000020">
    <property type="entry name" value="protein transport protein Sec24D isoform X1"/>
    <property type="match status" value="1"/>
</dbReference>
<dbReference type="Gene3D" id="2.60.40.1670">
    <property type="entry name" value="beta-sandwich domain of Sec23/24"/>
    <property type="match status" value="1"/>
</dbReference>
<dbReference type="Gene3D" id="1.20.120.730">
    <property type="entry name" value="Sec23/Sec24 helical domain"/>
    <property type="match status" value="1"/>
</dbReference>
<dbReference type="Gene3D" id="3.40.20.10">
    <property type="entry name" value="Severin"/>
    <property type="match status" value="1"/>
</dbReference>
<dbReference type="Gene3D" id="3.40.50.410">
    <property type="entry name" value="von Willebrand factor, type A domain"/>
    <property type="match status" value="1"/>
</dbReference>
<dbReference type="Gene3D" id="2.30.30.380">
    <property type="entry name" value="Zn-finger domain of Sec23/24"/>
    <property type="match status" value="1"/>
</dbReference>
<dbReference type="InterPro" id="IPR029006">
    <property type="entry name" value="ADF-H/Gelsolin-like_dom_sf"/>
</dbReference>
<dbReference type="InterPro" id="IPR007123">
    <property type="entry name" value="Gelsolin-like_dom"/>
</dbReference>
<dbReference type="InterPro" id="IPR036180">
    <property type="entry name" value="Gelsolin-like_dom_sf"/>
</dbReference>
<dbReference type="InterPro" id="IPR006900">
    <property type="entry name" value="Sec23/24_helical_dom"/>
</dbReference>
<dbReference type="InterPro" id="IPR036175">
    <property type="entry name" value="Sec23/24_helical_dom_sf"/>
</dbReference>
<dbReference type="InterPro" id="IPR006896">
    <property type="entry name" value="Sec23/24_trunk_dom"/>
</dbReference>
<dbReference type="InterPro" id="IPR012990">
    <property type="entry name" value="Sec23_24_beta_S"/>
</dbReference>
<dbReference type="InterPro" id="IPR050550">
    <property type="entry name" value="SEC23_SEC24_subfamily"/>
</dbReference>
<dbReference type="InterPro" id="IPR041742">
    <property type="entry name" value="Sec24-like_trunk_dom"/>
</dbReference>
<dbReference type="InterPro" id="IPR036465">
    <property type="entry name" value="vWFA_dom_sf"/>
</dbReference>
<dbReference type="InterPro" id="IPR006895">
    <property type="entry name" value="Znf_Sec23_Sec24"/>
</dbReference>
<dbReference type="InterPro" id="IPR036174">
    <property type="entry name" value="Znf_Sec23_Sec24_sf"/>
</dbReference>
<dbReference type="PANTHER" id="PTHR13803">
    <property type="entry name" value="SEC24-RELATED PROTEIN"/>
    <property type="match status" value="1"/>
</dbReference>
<dbReference type="PANTHER" id="PTHR13803:SF39">
    <property type="entry name" value="SECRETORY 24AB, ISOFORM A"/>
    <property type="match status" value="1"/>
</dbReference>
<dbReference type="Pfam" id="PF00626">
    <property type="entry name" value="Gelsolin"/>
    <property type="match status" value="1"/>
</dbReference>
<dbReference type="Pfam" id="PF08033">
    <property type="entry name" value="Sec23_BS"/>
    <property type="match status" value="1"/>
</dbReference>
<dbReference type="Pfam" id="PF04815">
    <property type="entry name" value="Sec23_helical"/>
    <property type="match status" value="1"/>
</dbReference>
<dbReference type="Pfam" id="PF04811">
    <property type="entry name" value="Sec23_trunk"/>
    <property type="match status" value="1"/>
</dbReference>
<dbReference type="Pfam" id="PF04810">
    <property type="entry name" value="zf-Sec23_Sec24"/>
    <property type="match status" value="1"/>
</dbReference>
<dbReference type="SUPFAM" id="SSF81995">
    <property type="entry name" value="beta-sandwich domain of Sec23/24"/>
    <property type="match status" value="1"/>
</dbReference>
<dbReference type="SUPFAM" id="SSF82754">
    <property type="entry name" value="C-terminal, gelsolin-like domain of Sec23/24"/>
    <property type="match status" value="1"/>
</dbReference>
<dbReference type="SUPFAM" id="SSF81811">
    <property type="entry name" value="Helical domain of Sec23/24"/>
    <property type="match status" value="1"/>
</dbReference>
<dbReference type="SUPFAM" id="SSF53300">
    <property type="entry name" value="vWA-like"/>
    <property type="match status" value="1"/>
</dbReference>
<dbReference type="SUPFAM" id="SSF82919">
    <property type="entry name" value="Zn-finger domain of Sec23/24"/>
    <property type="match status" value="1"/>
</dbReference>
<comment type="function">
    <text evidence="1 3 4 5 6">Essential protein (PubMed:19933202). Component of the coat protein complex II (COPII), that covers ER-derived vesicles involved in transport from the endoplasmic reticulum to the Golgi apparatus (PubMed:19933202, PubMed:24587212). COPII is composed of at least five proteins: the SEC23/24 complex, the SEC13/31 complex, and the protein SAR1 (By similarity). Acts in the cytoplasm to promote the transport of secretory, plasma membrane, and vacuolar proteins from the endoplasmic reticulum to the Golgi complex (PubMed:19933202). Involved in maintaining the dynamic identity of organelles of the early secretory pathway (PubMed:19933202). Regulates cell size patterning, and prevents CDKA;1-, DEK1- and ACR4-dependent endoreduplication and giant cells formation in sepals (PubMed:25315606). Required for male gametophytes (pollen grains) development and transmission (PubMed:21705385).</text>
</comment>
<comment type="function">
    <text evidence="7">(Microbial infection) Contributes to viral systemic infection of turnip mosaic virus (TuMV) by triggering the formation of host endoplasmic reticulum (ER)-derived viral vesicles that carry the viral RNA (vRNA) to plasmodesmata for cell-to-cell viral movement.</text>
</comment>
<comment type="subunit">
    <text evidence="1 6">Component of the coat protein complex II (COPII), composed of at least five proteins: the Sec23/24 complex, the Sec13/31 complex and Sar1 (By similarity). Interacts with SEC221, SEC23E/SEC23A, SEC23B, SEC23G/SEC23C and SEC23F/SEC23D (PubMed:25315606).</text>
</comment>
<comment type="subunit">
    <text evidence="7">(Microbial infection) Interacts with turnip mosaic virus (TuMV) 6K2 in COPII-coated vesicles.</text>
</comment>
<comment type="subcellular location">
    <subcellularLocation>
        <location evidence="1">Cytoplasmic vesicle</location>
        <location evidence="1">COPII-coated vesicle membrane</location>
        <topology evidence="1">Peripheral membrane protein</topology>
        <orientation evidence="1">Cytoplasmic side</orientation>
    </subcellularLocation>
    <subcellularLocation>
        <location evidence="1">Endoplasmic reticulum membrane</location>
        <topology evidence="1">Peripheral membrane protein</topology>
    </subcellularLocation>
    <subcellularLocation>
        <location evidence="3">Golgi apparatus membrane</location>
        <topology evidence="1">Peripheral membrane protein</topology>
    </subcellularLocation>
    <subcellularLocation>
        <location evidence="3">Cytoplasm</location>
        <location evidence="3">Cytosol</location>
    </subcellularLocation>
</comment>
<comment type="tissue specificity">
    <text evidence="4 6">Mainly expressed in pollen, leaves, inflorescences, roots and stems, and, to a lower extent, in cotyledons, petioles and hypocotyls.</text>
</comment>
<comment type="developmental stage">
    <text evidence="4 6">During pollen development, mainly expressed in uninucleate microspores (UNMS) and bicellular pollen (BICP), and fades out after the immature tricellular pollen (TRCP) stage (PubMed:21705385). Mostly observed in rapidly growing tissues through all developmental stages, such as shoot apices, distal root regions, and developing sepals (PubMed:25315606).</text>
</comment>
<comment type="disruption phenotype">
    <text evidence="3 4">Lethal in homozygotes (PubMed:19933202, PubMed:21705385). Non-Mendelian segregation of the mutant allele sec24a-1 due to defective male gametophytes (pollen grains) leading to a male-specific transmission defect (PubMed:21705385). In the missense recessive mutant sec24A (G92 mutation), altered endoplasmic reticulum (ER) structure with an abnormal distribution of critical component at ER export sites, thus leading to the partial accumulation of Golgi membrane proteins and a soluble secretory marker in globular structures composed of a mass of convoluted ER tubules that maintain a connection with the bulk ER (PubMed:19933202).</text>
</comment>
<comment type="similarity">
    <text evidence="11">Belongs to the SEC23/SEC24 family. SEC24 subfamily.</text>
</comment>
<comment type="sequence caution" evidence="11">
    <conflict type="erroneous gene model prediction">
        <sequence resource="EMBL-CDS" id="AAF20236"/>
    </conflict>
</comment>
<comment type="sequence caution" evidence="11">
    <conflict type="erroneous initiation">
        <sequence resource="EMBL-CDS" id="BAD94443"/>
    </conflict>
    <text>Truncated N-terminus.</text>
</comment>
<proteinExistence type="evidence at protein level"/>
<accession>Q9SFU0</accession>
<accession>Q56WS8</accession>
<accession>Q8L7A7</accession>
<gene>
    <name evidence="8 9 10" type="primary">SEC24A</name>
    <name evidence="9" type="synonym">ERMO2</name>
    <name evidence="12" type="ordered locus">At3g07100</name>
    <name evidence="13" type="ORF">T1B9.25</name>
</gene>